<evidence type="ECO:0000250" key="1">
    <source>
        <dbReference type="UniProtKB" id="P53045"/>
    </source>
</evidence>
<evidence type="ECO:0000255" key="2"/>
<evidence type="ECO:0000255" key="3">
    <source>
        <dbReference type="PROSITE-ProRule" id="PRU00498"/>
    </source>
</evidence>
<evidence type="ECO:0000269" key="4">
    <source>
    </source>
</evidence>
<evidence type="ECO:0000269" key="5">
    <source>
    </source>
</evidence>
<evidence type="ECO:0000303" key="6">
    <source>
    </source>
</evidence>
<evidence type="ECO:0000303" key="7">
    <source>
    </source>
</evidence>
<evidence type="ECO:0000305" key="8"/>
<evidence type="ECO:0000305" key="9">
    <source>
    </source>
</evidence>
<evidence type="ECO:0000305" key="10">
    <source>
    </source>
</evidence>
<feature type="chain" id="PRO_0000454125" description="Delta(7)-sterol 5(6)-desaturase erg3B">
    <location>
        <begin position="1"/>
        <end position="335"/>
    </location>
</feature>
<feature type="transmembrane region" description="Helical" evidence="2">
    <location>
        <begin position="74"/>
        <end position="94"/>
    </location>
</feature>
<feature type="transmembrane region" description="Helical" evidence="2">
    <location>
        <begin position="113"/>
        <end position="133"/>
    </location>
</feature>
<feature type="transmembrane region" description="Helical" evidence="2">
    <location>
        <begin position="152"/>
        <end position="172"/>
    </location>
</feature>
<feature type="transmembrane region" description="Helical" evidence="2">
    <location>
        <begin position="219"/>
        <end position="239"/>
    </location>
</feature>
<feature type="domain" description="Fatty acid hydroxylase" evidence="2">
    <location>
        <begin position="160"/>
        <end position="284"/>
    </location>
</feature>
<feature type="short sequence motif" description="Histidine box-1" evidence="1">
    <location>
        <begin position="173"/>
        <end position="177"/>
    </location>
</feature>
<feature type="short sequence motif" description="Histidine box-2" evidence="1">
    <location>
        <begin position="186"/>
        <end position="190"/>
    </location>
</feature>
<feature type="short sequence motif" description="Histidine box-3" evidence="1">
    <location>
        <begin position="261"/>
        <end position="265"/>
    </location>
</feature>
<feature type="glycosylation site" description="N-linked (GlcNAc...) asparagine" evidence="3">
    <location>
        <position position="256"/>
    </location>
</feature>
<organism>
    <name type="scientific">Aspergillus fumigatus (strain ATCC MYA-4609 / CBS 101355 / FGSC A1100 / Af293)</name>
    <name type="common">Neosartorya fumigata</name>
    <dbReference type="NCBI Taxonomy" id="330879"/>
    <lineage>
        <taxon>Eukaryota</taxon>
        <taxon>Fungi</taxon>
        <taxon>Dikarya</taxon>
        <taxon>Ascomycota</taxon>
        <taxon>Pezizomycotina</taxon>
        <taxon>Eurotiomycetes</taxon>
        <taxon>Eurotiomycetidae</taxon>
        <taxon>Eurotiales</taxon>
        <taxon>Aspergillaceae</taxon>
        <taxon>Aspergillus</taxon>
        <taxon>Aspergillus subgen. Fumigati</taxon>
    </lineage>
</organism>
<proteinExistence type="inferred from homology"/>
<comment type="function">
    <text evidence="4 5 9 10">Delta(7)-sterol 5(6)-desaturase; part of the third module of ergosterol biosynthesis pathway that includes the late steps of the pathway (PubMed:16436696, PubMed:18191972). Erg3B catalyzes the introduction of a C-5 double bond in the B ring to produce 5-dehydroepisterol (PubMed:16436696, PubMed:18191972). The third module or late pathway involves the ergosterol synthesis itself through consecutive reactions that mainly occur in the endoplasmic reticulum (ER) membrane. Firstly, the squalene synthase erg9 catalyzes the condensation of 2 farnesyl pyrophosphate moieties to form squalene, which is the precursor of all steroids. Squalene synthase is crucial for balancing the incorporation of farnesyl diphosphate (FPP) into sterol and nonsterol isoprene synthesis. Secondly, squalene is converted into lanosterol by the consecutive action of the squalene epoxidase erg1 and the lanosterol synthase erg7. Then, the delta(24)-sterol C-methyltransferase erg6 methylates lanosterol at C-24 to produce eburicol. Eburicol is the substrate of the sterol 14-alpha demethylase encoded by cyp51A and cyp51B, to yield 4,4,24-trimethyl ergosta-8,14,24(28)-trienol. The C-14 reductase erg24 then reduces the C14=C15 double bond which leads to 4,4-dimethylfecosterol. A sequence of further demethylations at C-4, involving the C-4 demethylation complex containing the C-4 methylsterol oxidases erg25A or erg25B, the sterol-4-alpha-carboxylate 3-dehydrogenase erg26 and the 3-keto-steroid reductase erg27, leads to the production of fecosterol via 4-methylfecosterol. The C-8 sterol isomerase erg2 then catalyzes the reaction which results in unsaturation at C-7 in the B ring of sterols and thus converts fecosterol to episterol. The sterol-C5-desaturase erg3B then catalyzes the introduction of a C-5 double bond in the B ring to produce 5-dehydroepisterol. The 2 other sterol-C5-desaturases, erg3A and erg3C, seem to be less important in ergosterol biosynthesis. The C-22 sterol desaturase erg5 further converts 5-dehydroepisterol into ergosta-5,7,22,24(28)-tetraen-3beta-ol by forming the C-22(23) double bond in the sterol side chain. Finally, ergosta-5,7,22,24(28)-tetraen-3beta-ol is substrate of the C-24(28) sterol reductases erg4A and erg4B to produce ergosterol. Possible alternative sterol biosynthetic pathways might exist from fecosterol to ergosterol, depending on the activities of the erg3 isoforms (Probable) (PubMed:16110826, PubMed:18191972).</text>
</comment>
<comment type="cofactor">
    <cofactor evidence="1">
        <name>Fe cation</name>
        <dbReference type="ChEBI" id="CHEBI:24875"/>
    </cofactor>
</comment>
<comment type="pathway">
    <text evidence="4 5">Steroid metabolism; ergosterol biosynthesis.</text>
</comment>
<comment type="subcellular location">
    <subcellularLocation>
        <location evidence="8">Endoplasmic reticulum membrane</location>
        <topology evidence="2">Multi-pass membrane protein</topology>
    </subcellularLocation>
</comment>
<comment type="domain">
    <text evidence="1">The histidine box domains may contain the active site and/or be involved in metal ion binding.</text>
</comment>
<comment type="disruption phenotype">
    <text evidence="4 5">Does not affect the susceptibility to amphotericin B, itraconazole, fluconazole, voriconazole, and ketoconazole (PubMed:16436696). Leads to the accumulation of the non-C-5 desaturated sterols 24-methylcholesta-7,22-dien-3beta-ol, 24-methylcholesta-7,22,24(28)-trien-3beta-ol, and 24-methylcholesta-7,24(28)-dien-3beta-ol (PubMed:16436696, PubMed:18191972).</text>
</comment>
<comment type="miscellaneous">
    <text evidence="10">In Aspergillus, the biosynthesis pathway of the sterol precursors leading to the prevalent sterol ergosterol differs from yeast. The ring system of lanosterol in S.cerevisiae is firstly demethylised in three enzymatic steps leading to the intermediate zymosterol and secondly a methyl group is added to zymosterol by the sterol 24-C-methyltransferase to form fecosterol. In Aspergillus, lanosterol is firstly transmethylated by the sterol 24-C-methyltransferase leading to the intermediate eburicol and secondly demethylated in three steps to form fecosterol.</text>
</comment>
<comment type="similarity">
    <text evidence="8">Belongs to the sterol desaturase family.</text>
</comment>
<gene>
    <name evidence="7" type="primary">erg3B</name>
    <name type="ORF">AFUA_2G00320</name>
</gene>
<reference key="1">
    <citation type="journal article" date="2005" name="Nature">
        <title>Genomic sequence of the pathogenic and allergenic filamentous fungus Aspergillus fumigatus.</title>
        <authorList>
            <person name="Nierman W.C."/>
            <person name="Pain A."/>
            <person name="Anderson M.J."/>
            <person name="Wortman J.R."/>
            <person name="Kim H.S."/>
            <person name="Arroyo J."/>
            <person name="Berriman M."/>
            <person name="Abe K."/>
            <person name="Archer D.B."/>
            <person name="Bermejo C."/>
            <person name="Bennett J.W."/>
            <person name="Bowyer P."/>
            <person name="Chen D."/>
            <person name="Collins M."/>
            <person name="Coulsen R."/>
            <person name="Davies R."/>
            <person name="Dyer P.S."/>
            <person name="Farman M.L."/>
            <person name="Fedorova N."/>
            <person name="Fedorova N.D."/>
            <person name="Feldblyum T.V."/>
            <person name="Fischer R."/>
            <person name="Fosker N."/>
            <person name="Fraser A."/>
            <person name="Garcia J.L."/>
            <person name="Garcia M.J."/>
            <person name="Goble A."/>
            <person name="Goldman G.H."/>
            <person name="Gomi K."/>
            <person name="Griffith-Jones S."/>
            <person name="Gwilliam R."/>
            <person name="Haas B.J."/>
            <person name="Haas H."/>
            <person name="Harris D.E."/>
            <person name="Horiuchi H."/>
            <person name="Huang J."/>
            <person name="Humphray S."/>
            <person name="Jimenez J."/>
            <person name="Keller N."/>
            <person name="Khouri H."/>
            <person name="Kitamoto K."/>
            <person name="Kobayashi T."/>
            <person name="Konzack S."/>
            <person name="Kulkarni R."/>
            <person name="Kumagai T."/>
            <person name="Lafton A."/>
            <person name="Latge J.-P."/>
            <person name="Li W."/>
            <person name="Lord A."/>
            <person name="Lu C."/>
            <person name="Majoros W.H."/>
            <person name="May G.S."/>
            <person name="Miller B.L."/>
            <person name="Mohamoud Y."/>
            <person name="Molina M."/>
            <person name="Monod M."/>
            <person name="Mouyna I."/>
            <person name="Mulligan S."/>
            <person name="Murphy L.D."/>
            <person name="O'Neil S."/>
            <person name="Paulsen I."/>
            <person name="Penalva M.A."/>
            <person name="Pertea M."/>
            <person name="Price C."/>
            <person name="Pritchard B.L."/>
            <person name="Quail M.A."/>
            <person name="Rabbinowitsch E."/>
            <person name="Rawlins N."/>
            <person name="Rajandream M.A."/>
            <person name="Reichard U."/>
            <person name="Renauld H."/>
            <person name="Robson G.D."/>
            <person name="Rodriguez de Cordoba S."/>
            <person name="Rodriguez-Pena J.M."/>
            <person name="Ronning C.M."/>
            <person name="Rutter S."/>
            <person name="Salzberg S.L."/>
            <person name="Sanchez M."/>
            <person name="Sanchez-Ferrero J.C."/>
            <person name="Saunders D."/>
            <person name="Seeger K."/>
            <person name="Squares R."/>
            <person name="Squares S."/>
            <person name="Takeuchi M."/>
            <person name="Tekaia F."/>
            <person name="Turner G."/>
            <person name="Vazquez de Aldana C.R."/>
            <person name="Weidman J."/>
            <person name="White O."/>
            <person name="Woodward J.R."/>
            <person name="Yu J.-H."/>
            <person name="Fraser C.M."/>
            <person name="Galagan J.E."/>
            <person name="Asai K."/>
            <person name="Machida M."/>
            <person name="Hall N."/>
            <person name="Barrell B.G."/>
            <person name="Denning D.W."/>
        </authorList>
    </citation>
    <scope>NUCLEOTIDE SEQUENCE [LARGE SCALE GENOMIC DNA]</scope>
    <source>
        <strain>ATCC MYA-4609 / CBS 101355 / FGSC A1100 / Af293</strain>
    </source>
</reference>
<reference key="2">
    <citation type="journal article" date="2005" name="Med. Mycol.">
        <title>The ergosterol biosynthesis pathway, transporter genes, and azole resistance in Aspergillus fumigatus.</title>
        <authorList>
            <person name="Ferreira M.E."/>
            <person name="Colombo A.L."/>
            <person name="Paulsen I."/>
            <person name="Ren Q."/>
            <person name="Wortman J."/>
            <person name="Huang J."/>
            <person name="Goldman M.H."/>
            <person name="Goldman G.H."/>
        </authorList>
    </citation>
    <scope>IDENTIFICATION</scope>
    <scope>FUNCTION</scope>
</reference>
<reference key="3">
    <citation type="journal article" date="2006" name="Antimicrob. Agents Chemother.">
        <title>Aspergillus fumigatus C-5 sterol desaturases Erg3A and Erg3B: role in sterol biosynthesis and antifungal drug susceptibility.</title>
        <authorList>
            <person name="Alcazar-Fuoli L."/>
            <person name="Mellado E."/>
            <person name="Garcia-Effron G."/>
            <person name="Buitrago M.J."/>
            <person name="Lopez J.F."/>
            <person name="Grimalt J.O."/>
            <person name="Cuenca-Estrella J.M."/>
            <person name="Rodriguez-Tudela J.L."/>
        </authorList>
    </citation>
    <scope>FUNCTION</scope>
    <scope>DISRUPTION PHENOTYPE</scope>
    <scope>PATHWAY</scope>
</reference>
<reference key="4">
    <citation type="journal article" date="2008" name="Steroids">
        <title>Ergosterol biosynthesis pathway in Aspergillus fumigatus.</title>
        <authorList>
            <person name="Alcazar-Fuoli L."/>
            <person name="Mellado E."/>
            <person name="Garcia-Effron G."/>
            <person name="Lopez J.F."/>
            <person name="Grimalt J.O."/>
            <person name="Cuenca-Estrella J.M."/>
            <person name="Rodriguez-Tudela J.L."/>
        </authorList>
    </citation>
    <scope>FUNCTION</scope>
    <scope>DISRUPTION PHENOTYPE</scope>
    <scope>PATHWAY</scope>
</reference>
<keyword id="KW-0256">Endoplasmic reticulum</keyword>
<keyword id="KW-0325">Glycoprotein</keyword>
<keyword id="KW-0444">Lipid biosynthesis</keyword>
<keyword id="KW-0443">Lipid metabolism</keyword>
<keyword id="KW-0472">Membrane</keyword>
<keyword id="KW-0560">Oxidoreductase</keyword>
<keyword id="KW-1185">Reference proteome</keyword>
<keyword id="KW-0752">Steroid biosynthesis</keyword>
<keyword id="KW-0753">Steroid metabolism</keyword>
<keyword id="KW-0756">Sterol biosynthesis</keyword>
<keyword id="KW-1207">Sterol metabolism</keyword>
<keyword id="KW-0812">Transmembrane</keyword>
<keyword id="KW-1133">Transmembrane helix</keyword>
<accession>Q4WIX5</accession>
<protein>
    <recommendedName>
        <fullName evidence="6">Delta(7)-sterol 5(6)-desaturase erg3B</fullName>
        <ecNumber evidence="4 5">1.14.19.-</ecNumber>
    </recommendedName>
    <alternativeName>
        <fullName evidence="6">C-5 sterol desaturase erg3B</fullName>
    </alternativeName>
    <alternativeName>
        <fullName evidence="8">Ergosterol Delta(5,6) desaturase erg3B</fullName>
    </alternativeName>
    <alternativeName>
        <fullName evidence="7">Ergosterol biosynthesis protein 3B</fullName>
    </alternativeName>
    <alternativeName>
        <fullName evidence="8">Sterol-C5-desaturase erg3B</fullName>
    </alternativeName>
</protein>
<name>ERG3B_ASPFU</name>
<sequence>MDVVLDVLDTFVFDKLYALLLPAKSFDLLDQDSVVDYNSHINRYVTLTPSQYAVESSLARDNILRQFLSLFITIWAFGLLLYLTTASLSFALVFDKRAMQHPKFLRHQIRLEIGQALRAMPVMAALTAPLFLAEVRGYSKLYDFPTGSPFPLYTYLQYPLFIAFTDFAIYWIHRGLHHPAIYKRLHKPHHRWIISTPYASYAFHPVDGWCQSLPYHVYPFLFPLQKAAYLGLFVFVTIWTVMIHDGEYALDSPVINGSACHTIHHYYFNYNYGQFITFWDRIGGSYRRPNRELFDKQQRLQQTEIQRQVEEMERLVKEVEGSDDRCYEQDTKKTS</sequence>
<dbReference type="EC" id="1.14.19.-" evidence="4 5"/>
<dbReference type="EMBL" id="AAHF01000008">
    <property type="protein sequence ID" value="EAL87130.1"/>
    <property type="molecule type" value="Genomic_DNA"/>
</dbReference>
<dbReference type="RefSeq" id="XP_749168.1">
    <property type="nucleotide sequence ID" value="XM_744075.1"/>
</dbReference>
<dbReference type="FunCoup" id="Q4WIX5">
    <property type="interactions" value="182"/>
</dbReference>
<dbReference type="STRING" id="330879.Q4WIX5"/>
<dbReference type="GlyCosmos" id="Q4WIX5">
    <property type="glycosylation" value="1 site, No reported glycans"/>
</dbReference>
<dbReference type="EnsemblFungi" id="EAL87130">
    <property type="protein sequence ID" value="EAL87130"/>
    <property type="gene ID" value="AFUA_2G00320"/>
</dbReference>
<dbReference type="GeneID" id="3506728"/>
<dbReference type="KEGG" id="afm:AFUA_2G00320"/>
<dbReference type="VEuPathDB" id="FungiDB:Afu2g00320"/>
<dbReference type="eggNOG" id="KOG0872">
    <property type="taxonomic scope" value="Eukaryota"/>
</dbReference>
<dbReference type="HOGENOM" id="CLU_047036_3_0_1"/>
<dbReference type="InParanoid" id="Q4WIX5"/>
<dbReference type="OMA" id="INGASCH"/>
<dbReference type="OrthoDB" id="6354873at2759"/>
<dbReference type="UniPathway" id="UPA00768"/>
<dbReference type="Proteomes" id="UP000002530">
    <property type="component" value="Chromosome 2"/>
</dbReference>
<dbReference type="GO" id="GO:0005789">
    <property type="term" value="C:endoplasmic reticulum membrane"/>
    <property type="evidence" value="ECO:0007669"/>
    <property type="project" value="UniProtKB-SubCell"/>
</dbReference>
<dbReference type="GO" id="GO:0016020">
    <property type="term" value="C:membrane"/>
    <property type="evidence" value="ECO:0000318"/>
    <property type="project" value="GO_Central"/>
</dbReference>
<dbReference type="GO" id="GO:0000248">
    <property type="term" value="F:C-5 sterol desaturase activity"/>
    <property type="evidence" value="ECO:0000318"/>
    <property type="project" value="GO_Central"/>
</dbReference>
<dbReference type="GO" id="GO:0005506">
    <property type="term" value="F:iron ion binding"/>
    <property type="evidence" value="ECO:0007669"/>
    <property type="project" value="InterPro"/>
</dbReference>
<dbReference type="GO" id="GO:0016126">
    <property type="term" value="P:sterol biosynthetic process"/>
    <property type="evidence" value="ECO:0000318"/>
    <property type="project" value="GO_Central"/>
</dbReference>
<dbReference type="InterPro" id="IPR006694">
    <property type="entry name" value="Fatty_acid_hydroxylase"/>
</dbReference>
<dbReference type="InterPro" id="IPR050307">
    <property type="entry name" value="Sterol_Desaturase_Related"/>
</dbReference>
<dbReference type="PANTHER" id="PTHR11863">
    <property type="entry name" value="STEROL DESATURASE"/>
    <property type="match status" value="1"/>
</dbReference>
<dbReference type="Pfam" id="PF04116">
    <property type="entry name" value="FA_hydroxylase"/>
    <property type="match status" value="1"/>
</dbReference>